<accession>Q5RAI9</accession>
<dbReference type="EMBL" id="CR859026">
    <property type="protein sequence ID" value="CAH91221.1"/>
    <property type="molecule type" value="mRNA"/>
</dbReference>
<dbReference type="RefSeq" id="NP_001125720.1">
    <property type="nucleotide sequence ID" value="NM_001132248.1"/>
</dbReference>
<dbReference type="SMR" id="Q5RAI9"/>
<dbReference type="FunCoup" id="Q5RAI9">
    <property type="interactions" value="3331"/>
</dbReference>
<dbReference type="STRING" id="9601.ENSPPYP00000001115"/>
<dbReference type="Ensembl" id="ENSPPYT00000001152.2">
    <property type="protein sequence ID" value="ENSPPYP00000001115.1"/>
    <property type="gene ID" value="ENSPPYG00000000957.2"/>
</dbReference>
<dbReference type="GeneID" id="100172644"/>
<dbReference type="KEGG" id="pon:100172644"/>
<dbReference type="CTD" id="9554"/>
<dbReference type="eggNOG" id="KOG0862">
    <property type="taxonomic scope" value="Eukaryota"/>
</dbReference>
<dbReference type="GeneTree" id="ENSGT00940000156349"/>
<dbReference type="HOGENOM" id="CLU_054453_4_1_1"/>
<dbReference type="InParanoid" id="Q5RAI9"/>
<dbReference type="OMA" id="FIYWRFF"/>
<dbReference type="OrthoDB" id="1719357at2759"/>
<dbReference type="TreeFam" id="TF105933"/>
<dbReference type="Proteomes" id="UP000001595">
    <property type="component" value="Chromosome 1"/>
</dbReference>
<dbReference type="GO" id="GO:0005789">
    <property type="term" value="C:endoplasmic reticulum membrane"/>
    <property type="evidence" value="ECO:0007669"/>
    <property type="project" value="UniProtKB-SubCell"/>
</dbReference>
<dbReference type="GO" id="GO:0033116">
    <property type="term" value="C:endoplasmic reticulum-Golgi intermediate compartment membrane"/>
    <property type="evidence" value="ECO:0007669"/>
    <property type="project" value="UniProtKB-SubCell"/>
</dbReference>
<dbReference type="GO" id="GO:0012507">
    <property type="term" value="C:ER to Golgi transport vesicle membrane"/>
    <property type="evidence" value="ECO:0007669"/>
    <property type="project" value="Ensembl"/>
</dbReference>
<dbReference type="GO" id="GO:0005794">
    <property type="term" value="C:Golgi apparatus"/>
    <property type="evidence" value="ECO:0007669"/>
    <property type="project" value="UniProtKB-SubCell"/>
</dbReference>
<dbReference type="GO" id="GO:0042470">
    <property type="term" value="C:melanosome"/>
    <property type="evidence" value="ECO:0007669"/>
    <property type="project" value="UniProtKB-SubCell"/>
</dbReference>
<dbReference type="GO" id="GO:0005484">
    <property type="term" value="F:SNAP receptor activity"/>
    <property type="evidence" value="ECO:0007669"/>
    <property type="project" value="InterPro"/>
</dbReference>
<dbReference type="GO" id="GO:0006888">
    <property type="term" value="P:endoplasmic reticulum to Golgi vesicle-mediated transport"/>
    <property type="evidence" value="ECO:0007669"/>
    <property type="project" value="InterPro"/>
</dbReference>
<dbReference type="GO" id="GO:1902902">
    <property type="term" value="P:negative regulation of autophagosome assembly"/>
    <property type="evidence" value="ECO:0007669"/>
    <property type="project" value="Ensembl"/>
</dbReference>
<dbReference type="GO" id="GO:0045732">
    <property type="term" value="P:positive regulation of protein catabolic process"/>
    <property type="evidence" value="ECO:0007669"/>
    <property type="project" value="Ensembl"/>
</dbReference>
<dbReference type="GO" id="GO:0015031">
    <property type="term" value="P:protein transport"/>
    <property type="evidence" value="ECO:0007669"/>
    <property type="project" value="UniProtKB-KW"/>
</dbReference>
<dbReference type="GO" id="GO:0006890">
    <property type="term" value="P:retrograde vesicle-mediated transport, Golgi to endoplasmic reticulum"/>
    <property type="evidence" value="ECO:0007669"/>
    <property type="project" value="InterPro"/>
</dbReference>
<dbReference type="CDD" id="cd14824">
    <property type="entry name" value="Longin"/>
    <property type="match status" value="1"/>
</dbReference>
<dbReference type="CDD" id="cd15866">
    <property type="entry name" value="R-SNARE_SEC22"/>
    <property type="match status" value="1"/>
</dbReference>
<dbReference type="FunFam" id="1.20.5.110:FF:000019">
    <property type="entry name" value="Vesicle-trafficking protein SEC22b"/>
    <property type="match status" value="1"/>
</dbReference>
<dbReference type="FunFam" id="3.30.450.50:FF:000004">
    <property type="entry name" value="vesicle-trafficking protein SEC22b"/>
    <property type="match status" value="1"/>
</dbReference>
<dbReference type="Gene3D" id="1.20.5.110">
    <property type="match status" value="1"/>
</dbReference>
<dbReference type="Gene3D" id="3.30.450.50">
    <property type="entry name" value="Longin domain"/>
    <property type="match status" value="1"/>
</dbReference>
<dbReference type="InterPro" id="IPR011012">
    <property type="entry name" value="Longin-like_dom_sf"/>
</dbReference>
<dbReference type="InterPro" id="IPR010908">
    <property type="entry name" value="Longin_dom"/>
</dbReference>
<dbReference type="InterPro" id="IPR044565">
    <property type="entry name" value="Sec22"/>
</dbReference>
<dbReference type="InterPro" id="IPR001388">
    <property type="entry name" value="Synaptobrevin-like"/>
</dbReference>
<dbReference type="InterPro" id="IPR042855">
    <property type="entry name" value="V_SNARE_CC"/>
</dbReference>
<dbReference type="PANTHER" id="PTHR45837">
    <property type="entry name" value="VESICLE-TRAFFICKING PROTEIN SEC22B"/>
    <property type="match status" value="1"/>
</dbReference>
<dbReference type="Pfam" id="PF13774">
    <property type="entry name" value="Longin"/>
    <property type="match status" value="1"/>
</dbReference>
<dbReference type="Pfam" id="PF00957">
    <property type="entry name" value="Synaptobrevin"/>
    <property type="match status" value="1"/>
</dbReference>
<dbReference type="PRINTS" id="PR00219">
    <property type="entry name" value="SYNAPTOBREVN"/>
</dbReference>
<dbReference type="SMART" id="SM01270">
    <property type="entry name" value="Longin"/>
    <property type="match status" value="1"/>
</dbReference>
<dbReference type="SUPFAM" id="SSF58038">
    <property type="entry name" value="SNARE fusion complex"/>
    <property type="match status" value="1"/>
</dbReference>
<dbReference type="SUPFAM" id="SSF64356">
    <property type="entry name" value="SNARE-like"/>
    <property type="match status" value="1"/>
</dbReference>
<dbReference type="PROSITE" id="PS50859">
    <property type="entry name" value="LONGIN"/>
    <property type="match status" value="1"/>
</dbReference>
<dbReference type="PROSITE" id="PS50892">
    <property type="entry name" value="V_SNARE"/>
    <property type="match status" value="1"/>
</dbReference>
<gene>
    <name type="primary">SEC22B</name>
    <name type="synonym">SEC22L1</name>
</gene>
<keyword id="KW-0007">Acetylation</keyword>
<keyword id="KW-0175">Coiled coil</keyword>
<keyword id="KW-0256">Endoplasmic reticulum</keyword>
<keyword id="KW-0931">ER-Golgi transport</keyword>
<keyword id="KW-0333">Golgi apparatus</keyword>
<keyword id="KW-0472">Membrane</keyword>
<keyword id="KW-0597">Phosphoprotein</keyword>
<keyword id="KW-0653">Protein transport</keyword>
<keyword id="KW-1185">Reference proteome</keyword>
<keyword id="KW-0812">Transmembrane</keyword>
<keyword id="KW-1133">Transmembrane helix</keyword>
<keyword id="KW-0813">Transport</keyword>
<protein>
    <recommendedName>
        <fullName>Vesicle-trafficking protein SEC22b</fullName>
    </recommendedName>
    <alternativeName>
        <fullName>SEC22 vesicle-trafficking protein homolog B</fullName>
    </alternativeName>
    <alternativeName>
        <fullName>SEC22 vesicle-trafficking protein-like 1</fullName>
    </alternativeName>
</protein>
<proteinExistence type="evidence at transcript level"/>
<sequence length="215" mass="24741">MVLLTMIARVADGLPLAASMQEDEQSGRDLQQYQSQAKQLFRKLNEQSPTRCTLEAGAMTFHYIIEQGVCYLVLCEAAFPKKLAFAYLEDLHSEFDEQHGKKVPTVSRPYSFIEFDTFIQKTKKLYIDSRARRNLGSINTELQDVQRIMVANIEEVLQRGEALSALDSKANNLSSLSKKYRQDAKYLNMRSTYAKLAAVAVFFIMLIVYVRFWWL</sequence>
<feature type="chain" id="PRO_0000206772" description="Vesicle-trafficking protein SEC22b">
    <location>
        <begin position="1"/>
        <end position="215"/>
    </location>
</feature>
<feature type="topological domain" description="Cytoplasmic" evidence="4">
    <location>
        <begin position="1"/>
        <end position="194"/>
    </location>
</feature>
<feature type="transmembrane region" description="Helical; Anchor for type IV membrane protein" evidence="4">
    <location>
        <begin position="195"/>
        <end position="215"/>
    </location>
</feature>
<feature type="domain" description="Longin" evidence="5">
    <location>
        <begin position="6"/>
        <end position="119"/>
    </location>
</feature>
<feature type="domain" description="v-SNARE coiled-coil homology" evidence="6">
    <location>
        <begin position="134"/>
        <end position="194"/>
    </location>
</feature>
<feature type="modified residue" description="N6-acetyllysine" evidence="2">
    <location>
        <position position="38"/>
    </location>
</feature>
<feature type="modified residue" description="Phosphoserine" evidence="2">
    <location>
        <position position="137"/>
    </location>
</feature>
<feature type="modified residue" description="Phosphothreonine" evidence="2">
    <location>
        <position position="140"/>
    </location>
</feature>
<feature type="modified residue" description="Phosphoserine" evidence="2">
    <location>
        <position position="164"/>
    </location>
</feature>
<feature type="modified residue" description="Phosphoserine" evidence="2">
    <location>
        <position position="168"/>
    </location>
</feature>
<feature type="modified residue" description="Phosphoserine" evidence="2">
    <location>
        <position position="174"/>
    </location>
</feature>
<feature type="modified residue" description="Phosphoserine" evidence="2">
    <location>
        <position position="177"/>
    </location>
</feature>
<evidence type="ECO:0000250" key="1"/>
<evidence type="ECO:0000250" key="2">
    <source>
        <dbReference type="UniProtKB" id="O75396"/>
    </source>
</evidence>
<evidence type="ECO:0000250" key="3">
    <source>
        <dbReference type="UniProtKB" id="Q4KM74"/>
    </source>
</evidence>
<evidence type="ECO:0000255" key="4"/>
<evidence type="ECO:0000255" key="5">
    <source>
        <dbReference type="PROSITE-ProRule" id="PRU00231"/>
    </source>
</evidence>
<evidence type="ECO:0000255" key="6">
    <source>
        <dbReference type="PROSITE-ProRule" id="PRU00290"/>
    </source>
</evidence>
<evidence type="ECO:0000305" key="7"/>
<reference key="1">
    <citation type="submission" date="2004-11" db="EMBL/GenBank/DDBJ databases">
        <authorList>
            <consortium name="The German cDNA consortium"/>
        </authorList>
    </citation>
    <scope>NUCLEOTIDE SEQUENCE [LARGE SCALE MRNA]</scope>
    <source>
        <tissue>Brain cortex</tissue>
    </source>
</reference>
<comment type="function">
    <text evidence="1">SNARE involved in targeting and fusion of ER-derived transport vesicles with the Golgi complex as well as Golgi-derived retrograde transport vesicles with the ER.</text>
</comment>
<comment type="subunit">
    <text evidence="2 3">Interacts with STX17. Component of two distinct SNARE complexes consisting of STX5, GOSR2/BOS1, BET1 and SEC22B or STX18, USE1L, BNIP1/SEC20L and SEC22B. YKT6 can probably replace SEC22B as subunit of either complex (By similarity). Interacts with the COPII Sec23/24 complex composed of SEC23A and SEC24A; recruits SEC22B into COPII-coated vesicles to allow its transport from the endoplasmic reticulum to the Golgi (By similarity). Interacts with BET1 (By similarity).</text>
</comment>
<comment type="subcellular location">
    <subcellularLocation>
        <location evidence="3">Endoplasmic reticulum membrane</location>
        <topology evidence="3">Single-pass type IV membrane protein</topology>
    </subcellularLocation>
    <subcellularLocation>
        <location evidence="3">Endoplasmic reticulum-Golgi intermediate compartment membrane</location>
    </subcellularLocation>
    <subcellularLocation>
        <location evidence="3">Golgi apparatus</location>
        <location evidence="3">cis-Golgi network membrane</location>
    </subcellularLocation>
    <subcellularLocation>
        <location evidence="3">Golgi apparatus</location>
        <location evidence="3">trans-Golgi network membrane</location>
    </subcellularLocation>
    <subcellularLocation>
        <location evidence="2">Melanosome</location>
    </subcellularLocation>
    <text evidence="3">Concentrated most in the intermediate compartment/cis-Golgi network and the cis-Golgi cisternae 1 and 2. Greatly reduced in concentration at the trans end of the Golgi apparatus.</text>
</comment>
<comment type="similarity">
    <text evidence="7">Belongs to the synaptobrevin family.</text>
</comment>
<name>SC22B_PONAB</name>
<organism>
    <name type="scientific">Pongo abelii</name>
    <name type="common">Sumatran orangutan</name>
    <name type="synonym">Pongo pygmaeus abelii</name>
    <dbReference type="NCBI Taxonomy" id="9601"/>
    <lineage>
        <taxon>Eukaryota</taxon>
        <taxon>Metazoa</taxon>
        <taxon>Chordata</taxon>
        <taxon>Craniata</taxon>
        <taxon>Vertebrata</taxon>
        <taxon>Euteleostomi</taxon>
        <taxon>Mammalia</taxon>
        <taxon>Eutheria</taxon>
        <taxon>Euarchontoglires</taxon>
        <taxon>Primates</taxon>
        <taxon>Haplorrhini</taxon>
        <taxon>Catarrhini</taxon>
        <taxon>Hominidae</taxon>
        <taxon>Pongo</taxon>
    </lineage>
</organism>